<name>DAPH_THEAB</name>
<feature type="chain" id="PRO_0000376726" description="2,3,4,5-tetrahydropyridine-2,6-dicarboxylate N-acetyltransferase">
    <location>
        <begin position="1"/>
        <end position="233"/>
    </location>
</feature>
<reference key="1">
    <citation type="journal article" date="2009" name="J. Bacteriol.">
        <title>The genome of Thermosipho africanus TCF52B: lateral genetic connections to the Firmicutes and Archaea.</title>
        <authorList>
            <person name="Nesboe C.L."/>
            <person name="Bapteste E."/>
            <person name="Curtis B."/>
            <person name="Dahle H."/>
            <person name="Lopez P."/>
            <person name="Macleod D."/>
            <person name="Dlutek M."/>
            <person name="Bowman S."/>
            <person name="Zhaxybayeva O."/>
            <person name="Birkeland N.-K."/>
            <person name="Doolittle W.F."/>
        </authorList>
    </citation>
    <scope>NUCLEOTIDE SEQUENCE [LARGE SCALE GENOMIC DNA]</scope>
    <source>
        <strain>TCF52B</strain>
    </source>
</reference>
<sequence length="233" mass="24940">MNTQEIINLIANSKKKTLTVAYLTGNLKNIDFKSFEFFGTENFGILFGEYEEIVKLIENNKEHIEKYKLEIKARNSAIPLANLAKYNARIEPGAIIRDLVEIGDGAVIMMGAVINIGAKIGEGTMIDMNAVVGGRAIIGKNCHIGAGAVIAGVIEPPSAQPVIIEDNVMVGANAVILEGVRIGQNSVIAAGAVVIEDVPPNSVVAGVPAKIIKKVDEKTKQKTQIVEGLRKLR</sequence>
<accession>B7IF15</accession>
<keyword id="KW-0012">Acyltransferase</keyword>
<keyword id="KW-0028">Amino-acid biosynthesis</keyword>
<keyword id="KW-0220">Diaminopimelate biosynthesis</keyword>
<keyword id="KW-0457">Lysine biosynthesis</keyword>
<keyword id="KW-1185">Reference proteome</keyword>
<keyword id="KW-0677">Repeat</keyword>
<keyword id="KW-0808">Transferase</keyword>
<dbReference type="EC" id="2.3.1.89" evidence="1"/>
<dbReference type="EMBL" id="CP001185">
    <property type="protein sequence ID" value="ACJ74679.1"/>
    <property type="molecule type" value="Genomic_DNA"/>
</dbReference>
<dbReference type="SMR" id="B7IF15"/>
<dbReference type="STRING" id="484019.THA_174"/>
<dbReference type="KEGG" id="taf:THA_174"/>
<dbReference type="eggNOG" id="COG2171">
    <property type="taxonomic scope" value="Bacteria"/>
</dbReference>
<dbReference type="HOGENOM" id="CLU_103751_0_0_0"/>
<dbReference type="OrthoDB" id="9788080at2"/>
<dbReference type="UniPathway" id="UPA00034">
    <property type="reaction ID" value="UER00022"/>
</dbReference>
<dbReference type="Proteomes" id="UP000002453">
    <property type="component" value="Chromosome"/>
</dbReference>
<dbReference type="GO" id="GO:0047200">
    <property type="term" value="F:tetrahydrodipicolinate N-acetyltransferase activity"/>
    <property type="evidence" value="ECO:0007669"/>
    <property type="project" value="UniProtKB-EC"/>
</dbReference>
<dbReference type="GO" id="GO:0019877">
    <property type="term" value="P:diaminopimelate biosynthetic process"/>
    <property type="evidence" value="ECO:0007669"/>
    <property type="project" value="UniProtKB-UniRule"/>
</dbReference>
<dbReference type="GO" id="GO:0009089">
    <property type="term" value="P:lysine biosynthetic process via diaminopimelate"/>
    <property type="evidence" value="ECO:0007669"/>
    <property type="project" value="UniProtKB-UniRule"/>
</dbReference>
<dbReference type="CDD" id="cd03350">
    <property type="entry name" value="LbH_THP_succinylT"/>
    <property type="match status" value="1"/>
</dbReference>
<dbReference type="Gene3D" id="2.160.10.10">
    <property type="entry name" value="Hexapeptide repeat proteins"/>
    <property type="match status" value="1"/>
</dbReference>
<dbReference type="Gene3D" id="3.30.70.250">
    <property type="entry name" value="Malonyl-CoA ACP transacylase, ACP-binding"/>
    <property type="match status" value="1"/>
</dbReference>
<dbReference type="HAMAP" id="MF_01691">
    <property type="entry name" value="DapH"/>
    <property type="match status" value="1"/>
</dbReference>
<dbReference type="InterPro" id="IPR019873">
    <property type="entry name" value="DapH"/>
</dbReference>
<dbReference type="InterPro" id="IPR013710">
    <property type="entry name" value="DapH_N"/>
</dbReference>
<dbReference type="InterPro" id="IPR001451">
    <property type="entry name" value="Hexapep"/>
</dbReference>
<dbReference type="InterPro" id="IPR018357">
    <property type="entry name" value="Hexapep_transf_CS"/>
</dbReference>
<dbReference type="InterPro" id="IPR050179">
    <property type="entry name" value="Trans_hexapeptide_repeat"/>
</dbReference>
<dbReference type="InterPro" id="IPR011004">
    <property type="entry name" value="Trimer_LpxA-like_sf"/>
</dbReference>
<dbReference type="NCBIfam" id="TIGR03532">
    <property type="entry name" value="DapD_Ac"/>
    <property type="match status" value="1"/>
</dbReference>
<dbReference type="PANTHER" id="PTHR43300:SF10">
    <property type="entry name" value="2,3,4,5-TETRAHYDROPYRIDINE-2,6-DICARBOXYLATE N-ACETYLTRANSFERASE"/>
    <property type="match status" value="1"/>
</dbReference>
<dbReference type="PANTHER" id="PTHR43300">
    <property type="entry name" value="ACETYLTRANSFERASE"/>
    <property type="match status" value="1"/>
</dbReference>
<dbReference type="Pfam" id="PF08503">
    <property type="entry name" value="DapH_N"/>
    <property type="match status" value="1"/>
</dbReference>
<dbReference type="Pfam" id="PF00132">
    <property type="entry name" value="Hexapep"/>
    <property type="match status" value="1"/>
</dbReference>
<dbReference type="Pfam" id="PF14602">
    <property type="entry name" value="Hexapep_2"/>
    <property type="match status" value="1"/>
</dbReference>
<dbReference type="SUPFAM" id="SSF51161">
    <property type="entry name" value="Trimeric LpxA-like enzymes"/>
    <property type="match status" value="1"/>
</dbReference>
<dbReference type="PROSITE" id="PS00101">
    <property type="entry name" value="HEXAPEP_TRANSFERASES"/>
    <property type="match status" value="1"/>
</dbReference>
<comment type="function">
    <text evidence="1">Catalyzes the transfer of an acetyl group from acetyl-CoA to tetrahydrodipicolinate.</text>
</comment>
<comment type="catalytic activity">
    <reaction evidence="1">
        <text>(S)-2,3,4,5-tetrahydrodipicolinate + acetyl-CoA + H2O = L-2-acetamido-6-oxoheptanedioate + CoA</text>
        <dbReference type="Rhea" id="RHEA:13085"/>
        <dbReference type="ChEBI" id="CHEBI:15377"/>
        <dbReference type="ChEBI" id="CHEBI:16845"/>
        <dbReference type="ChEBI" id="CHEBI:57287"/>
        <dbReference type="ChEBI" id="CHEBI:57288"/>
        <dbReference type="ChEBI" id="CHEBI:58117"/>
        <dbReference type="EC" id="2.3.1.89"/>
    </reaction>
</comment>
<comment type="pathway">
    <text evidence="1">Amino-acid biosynthesis; L-lysine biosynthesis via DAP pathway; LL-2,6-diaminopimelate from (S)-tetrahydrodipicolinate (acetylase route): step 1/3.</text>
</comment>
<comment type="similarity">
    <text evidence="1">Belongs to the transferase hexapeptide repeat family. DapH subfamily.</text>
</comment>
<gene>
    <name evidence="1" type="primary">dapH</name>
    <name type="ordered locus">THA_174</name>
</gene>
<protein>
    <recommendedName>
        <fullName evidence="1">2,3,4,5-tetrahydropyridine-2,6-dicarboxylate N-acetyltransferase</fullName>
        <ecNumber evidence="1">2.3.1.89</ecNumber>
    </recommendedName>
    <alternativeName>
        <fullName evidence="1">Tetrahydrodipicolinate N-acetyltransferase</fullName>
        <shortName evidence="1">THP acetyltransferase</shortName>
        <shortName evidence="1">Tetrahydropicolinate acetylase</shortName>
    </alternativeName>
</protein>
<proteinExistence type="inferred from homology"/>
<organism>
    <name type="scientific">Thermosipho africanus (strain TCF52B)</name>
    <dbReference type="NCBI Taxonomy" id="484019"/>
    <lineage>
        <taxon>Bacteria</taxon>
        <taxon>Thermotogati</taxon>
        <taxon>Thermotogota</taxon>
        <taxon>Thermotogae</taxon>
        <taxon>Thermotogales</taxon>
        <taxon>Fervidobacteriaceae</taxon>
        <taxon>Thermosipho</taxon>
    </lineage>
</organism>
<evidence type="ECO:0000255" key="1">
    <source>
        <dbReference type="HAMAP-Rule" id="MF_01691"/>
    </source>
</evidence>